<keyword id="KW-0028">Amino-acid biosynthesis</keyword>
<keyword id="KW-0413">Isomerase</keyword>
<keyword id="KW-0486">Methionine biosynthesis</keyword>
<keyword id="KW-1185">Reference proteome</keyword>
<feature type="chain" id="PRO_0000156096" description="Methylthioribose-1-phosphate isomerase">
    <location>
        <begin position="1"/>
        <end position="364"/>
    </location>
</feature>
<feature type="active site" description="Proton donor" evidence="1">
    <location>
        <position position="242"/>
    </location>
</feature>
<feature type="binding site" evidence="1">
    <location>
        <begin position="49"/>
        <end position="51"/>
    </location>
    <ligand>
        <name>substrate</name>
    </ligand>
</feature>
<feature type="binding site" evidence="1">
    <location>
        <position position="89"/>
    </location>
    <ligand>
        <name>substrate</name>
    </ligand>
</feature>
<feature type="binding site" evidence="1">
    <location>
        <position position="201"/>
    </location>
    <ligand>
        <name>substrate</name>
    </ligand>
</feature>
<feature type="binding site" evidence="1">
    <location>
        <begin position="252"/>
        <end position="253"/>
    </location>
    <ligand>
        <name>substrate</name>
    </ligand>
</feature>
<feature type="site" description="Transition state stabilizer" evidence="1">
    <location>
        <position position="162"/>
    </location>
</feature>
<comment type="function">
    <text evidence="1">Catalyzes the interconversion of methylthioribose-1-phosphate (MTR-1-P) into methylthioribulose-1-phosphate (MTRu-1-P).</text>
</comment>
<comment type="catalytic activity">
    <reaction evidence="1">
        <text>5-(methylsulfanyl)-alpha-D-ribose 1-phosphate = 5-(methylsulfanyl)-D-ribulose 1-phosphate</text>
        <dbReference type="Rhea" id="RHEA:19989"/>
        <dbReference type="ChEBI" id="CHEBI:58533"/>
        <dbReference type="ChEBI" id="CHEBI:58548"/>
        <dbReference type="EC" id="5.3.1.23"/>
    </reaction>
</comment>
<comment type="pathway">
    <text evidence="1">Amino-acid biosynthesis; L-methionine biosynthesis via salvage pathway; L-methionine from S-methyl-5-thio-alpha-D-ribose 1-phosphate: step 1/6.</text>
</comment>
<comment type="similarity">
    <text evidence="2">Belongs to the eIF-2B alpha/beta/delta subunits family. MtnA subfamily.</text>
</comment>
<sequence>MQESGLKPILWKNKELILLDQRVLPGTTSYITAKTLEDCIFAIREMVVRGAPAIAITGAFGITLYWNSLVSKPSFSELKLKLSELLESRPTAVNLRLAIEEFSSRFPESNYSSFSLEEIQKGAEELALFMLSEDLENNLTLSKYALSLFPKQPSSLNIITHCNTGALATAGHGTALGVIRSLRDAGHSLTVFADETRPYLQGARLTAWELQEEKIQSFLITDNMAGWVMSSRKIDAVIVGADRIASNGDTANKIGTYPLAIVAKHHGVPFYVAATAKSMDFRIPNGSYIPIEMRKEEEITSFGFLKDSDGKPLLKEGVIAPKGMKALNPSFDVTPASLITGIITEKGIVSPVTEENLKKIFQLI</sequence>
<gene>
    <name evidence="1" type="primary">mtnA</name>
    <name type="ordered locus">LA_2868</name>
</gene>
<dbReference type="EC" id="5.3.1.23" evidence="1"/>
<dbReference type="EMBL" id="AE010300">
    <property type="protein sequence ID" value="AAN50067.1"/>
    <property type="molecule type" value="Genomic_DNA"/>
</dbReference>
<dbReference type="RefSeq" id="NP_713049.1">
    <property type="nucleotide sequence ID" value="NC_004342.2"/>
</dbReference>
<dbReference type="RefSeq" id="WP_001158184.1">
    <property type="nucleotide sequence ID" value="NC_004342.2"/>
</dbReference>
<dbReference type="SMR" id="Q8F2A8"/>
<dbReference type="STRING" id="189518.LA_2868"/>
<dbReference type="PaxDb" id="189518-LA_2868"/>
<dbReference type="EnsemblBacteria" id="AAN50067">
    <property type="protein sequence ID" value="AAN50067"/>
    <property type="gene ID" value="LA_2868"/>
</dbReference>
<dbReference type="KEGG" id="lil:LA_2868"/>
<dbReference type="PATRIC" id="fig|189518.3.peg.2848"/>
<dbReference type="HOGENOM" id="CLU_016218_1_2_12"/>
<dbReference type="InParanoid" id="Q8F2A8"/>
<dbReference type="OrthoDB" id="9803436at2"/>
<dbReference type="UniPathway" id="UPA00904">
    <property type="reaction ID" value="UER00874"/>
</dbReference>
<dbReference type="Proteomes" id="UP000001408">
    <property type="component" value="Chromosome I"/>
</dbReference>
<dbReference type="GO" id="GO:0046523">
    <property type="term" value="F:S-methyl-5-thioribose-1-phosphate isomerase activity"/>
    <property type="evidence" value="ECO:0000318"/>
    <property type="project" value="GO_Central"/>
</dbReference>
<dbReference type="GO" id="GO:0019509">
    <property type="term" value="P:L-methionine salvage from methylthioadenosine"/>
    <property type="evidence" value="ECO:0000318"/>
    <property type="project" value="GO_Central"/>
</dbReference>
<dbReference type="FunFam" id="1.20.120.420:FF:000003">
    <property type="entry name" value="Methylthioribose-1-phosphate isomerase"/>
    <property type="match status" value="1"/>
</dbReference>
<dbReference type="FunFam" id="3.40.50.10470:FF:000006">
    <property type="entry name" value="Methylthioribose-1-phosphate isomerase"/>
    <property type="match status" value="1"/>
</dbReference>
<dbReference type="Gene3D" id="1.20.120.420">
    <property type="entry name" value="translation initiation factor eif-2b, domain 1"/>
    <property type="match status" value="1"/>
</dbReference>
<dbReference type="Gene3D" id="3.40.50.10470">
    <property type="entry name" value="Translation initiation factor eif-2b, domain 2"/>
    <property type="match status" value="1"/>
</dbReference>
<dbReference type="HAMAP" id="MF_01678">
    <property type="entry name" value="Salvage_MtnA"/>
    <property type="match status" value="1"/>
</dbReference>
<dbReference type="InterPro" id="IPR000649">
    <property type="entry name" value="IF-2B-related"/>
</dbReference>
<dbReference type="InterPro" id="IPR005251">
    <property type="entry name" value="IF-M1Pi"/>
</dbReference>
<dbReference type="InterPro" id="IPR042529">
    <property type="entry name" value="IF_2B-like_C"/>
</dbReference>
<dbReference type="InterPro" id="IPR011559">
    <property type="entry name" value="Initiation_fac_2B_a/b/d"/>
</dbReference>
<dbReference type="InterPro" id="IPR027363">
    <property type="entry name" value="M1Pi_N"/>
</dbReference>
<dbReference type="InterPro" id="IPR037171">
    <property type="entry name" value="NagB/RpiA_transferase-like"/>
</dbReference>
<dbReference type="NCBIfam" id="TIGR00524">
    <property type="entry name" value="eIF-2B_rel"/>
    <property type="match status" value="1"/>
</dbReference>
<dbReference type="NCBIfam" id="NF004326">
    <property type="entry name" value="PRK05720.1"/>
    <property type="match status" value="1"/>
</dbReference>
<dbReference type="NCBIfam" id="TIGR00512">
    <property type="entry name" value="salvage_mtnA"/>
    <property type="match status" value="1"/>
</dbReference>
<dbReference type="PANTHER" id="PTHR43475">
    <property type="entry name" value="METHYLTHIORIBOSE-1-PHOSPHATE ISOMERASE"/>
    <property type="match status" value="1"/>
</dbReference>
<dbReference type="PANTHER" id="PTHR43475:SF1">
    <property type="entry name" value="METHYLTHIORIBOSE-1-PHOSPHATE ISOMERASE"/>
    <property type="match status" value="1"/>
</dbReference>
<dbReference type="Pfam" id="PF01008">
    <property type="entry name" value="IF-2B"/>
    <property type="match status" value="1"/>
</dbReference>
<dbReference type="SUPFAM" id="SSF100950">
    <property type="entry name" value="NagB/RpiA/CoA transferase-like"/>
    <property type="match status" value="1"/>
</dbReference>
<proteinExistence type="inferred from homology"/>
<accession>Q8F2A8</accession>
<reference key="1">
    <citation type="journal article" date="2003" name="Nature">
        <title>Unique physiological and pathogenic features of Leptospira interrogans revealed by whole-genome sequencing.</title>
        <authorList>
            <person name="Ren S.-X."/>
            <person name="Fu G."/>
            <person name="Jiang X.-G."/>
            <person name="Zeng R."/>
            <person name="Miao Y.-G."/>
            <person name="Xu H."/>
            <person name="Zhang Y.-X."/>
            <person name="Xiong H."/>
            <person name="Lu G."/>
            <person name="Lu L.-F."/>
            <person name="Jiang H.-Q."/>
            <person name="Jia J."/>
            <person name="Tu Y.-F."/>
            <person name="Jiang J.-X."/>
            <person name="Gu W.-Y."/>
            <person name="Zhang Y.-Q."/>
            <person name="Cai Z."/>
            <person name="Sheng H.-H."/>
            <person name="Yin H.-F."/>
            <person name="Zhang Y."/>
            <person name="Zhu G.-F."/>
            <person name="Wan M."/>
            <person name="Huang H.-L."/>
            <person name="Qian Z."/>
            <person name="Wang S.-Y."/>
            <person name="Ma W."/>
            <person name="Yao Z.-J."/>
            <person name="Shen Y."/>
            <person name="Qiang B.-Q."/>
            <person name="Xia Q.-C."/>
            <person name="Guo X.-K."/>
            <person name="Danchin A."/>
            <person name="Saint Girons I."/>
            <person name="Somerville R.L."/>
            <person name="Wen Y.-M."/>
            <person name="Shi M.-H."/>
            <person name="Chen Z."/>
            <person name="Xu J.-G."/>
            <person name="Zhao G.-P."/>
        </authorList>
    </citation>
    <scope>NUCLEOTIDE SEQUENCE [LARGE SCALE GENOMIC DNA]</scope>
    <source>
        <strain>56601</strain>
    </source>
</reference>
<name>MTNA_LEPIN</name>
<evidence type="ECO:0000255" key="1">
    <source>
        <dbReference type="HAMAP-Rule" id="MF_01678"/>
    </source>
</evidence>
<evidence type="ECO:0000305" key="2"/>
<organism>
    <name type="scientific">Leptospira interrogans serogroup Icterohaemorrhagiae serovar Lai (strain 56601)</name>
    <dbReference type="NCBI Taxonomy" id="189518"/>
    <lineage>
        <taxon>Bacteria</taxon>
        <taxon>Pseudomonadati</taxon>
        <taxon>Spirochaetota</taxon>
        <taxon>Spirochaetia</taxon>
        <taxon>Leptospirales</taxon>
        <taxon>Leptospiraceae</taxon>
        <taxon>Leptospira</taxon>
    </lineage>
</organism>
<protein>
    <recommendedName>
        <fullName evidence="1">Methylthioribose-1-phosphate isomerase</fullName>
        <shortName evidence="1">M1Pi</shortName>
        <shortName evidence="1">MTR-1-P isomerase</shortName>
        <ecNumber evidence="1">5.3.1.23</ecNumber>
    </recommendedName>
    <alternativeName>
        <fullName evidence="1">S-methyl-5-thioribose-1-phosphate isomerase</fullName>
    </alternativeName>
</protein>